<organism>
    <name type="scientific">Mycobacterium tuberculosis (strain ATCC 25618 / H37Rv)</name>
    <dbReference type="NCBI Taxonomy" id="83332"/>
    <lineage>
        <taxon>Bacteria</taxon>
        <taxon>Bacillati</taxon>
        <taxon>Actinomycetota</taxon>
        <taxon>Actinomycetes</taxon>
        <taxon>Mycobacteriales</taxon>
        <taxon>Mycobacteriaceae</taxon>
        <taxon>Mycobacterium</taxon>
        <taxon>Mycobacterium tuberculosis complex</taxon>
    </lineage>
</organism>
<protein>
    <recommendedName>
        <fullName evidence="1">Cell division protein FtsQ</fullName>
    </recommendedName>
</protein>
<accession>P9WNA1</accession>
<accession>L0TBG9</accession>
<accession>O06226</accession>
<accession>P64168</accession>
<sequence length="314" mass="33934">MTEHNEDPQIERVADDAADEEAVTEPLATESKDEPAEHPEFEGPRRRARRERAERRAAQARATAIEQARRAAKRRARGQIVSEQNPAKPAARGVVRGLKALLATVVLAVVGIGLGLALYFTPAMSAREIVIIGIGAVSREEVLDAARVRPATPLLQIDTQQVADRVATIRRVASARVQRQYPSALRITIVERVPVVVKDFSDGPHLFDRDGVDFATDPPPPALPYFDVDNPGPSDPTTKAALQVLTALHPEVASQVGRIAAPSVASITLTLADGRVVIWGTTDRCEEKAEKLAALLTQPGRTYDVSSPDLPTVK</sequence>
<name>FTSQ_MYCTU</name>
<proteinExistence type="evidence at protein level"/>
<reference key="1">
    <citation type="journal article" date="1998" name="Nature">
        <title>Deciphering the biology of Mycobacterium tuberculosis from the complete genome sequence.</title>
        <authorList>
            <person name="Cole S.T."/>
            <person name="Brosch R."/>
            <person name="Parkhill J."/>
            <person name="Garnier T."/>
            <person name="Churcher C.M."/>
            <person name="Harris D.E."/>
            <person name="Gordon S.V."/>
            <person name="Eiglmeier K."/>
            <person name="Gas S."/>
            <person name="Barry C.E. III"/>
            <person name="Tekaia F."/>
            <person name="Badcock K."/>
            <person name="Basham D."/>
            <person name="Brown D."/>
            <person name="Chillingworth T."/>
            <person name="Connor R."/>
            <person name="Davies R.M."/>
            <person name="Devlin K."/>
            <person name="Feltwell T."/>
            <person name="Gentles S."/>
            <person name="Hamlin N."/>
            <person name="Holroyd S."/>
            <person name="Hornsby T."/>
            <person name="Jagels K."/>
            <person name="Krogh A."/>
            <person name="McLean J."/>
            <person name="Moule S."/>
            <person name="Murphy L.D."/>
            <person name="Oliver S."/>
            <person name="Osborne J."/>
            <person name="Quail M.A."/>
            <person name="Rajandream M.A."/>
            <person name="Rogers J."/>
            <person name="Rutter S."/>
            <person name="Seeger K."/>
            <person name="Skelton S."/>
            <person name="Squares S."/>
            <person name="Squares R."/>
            <person name="Sulston J.E."/>
            <person name="Taylor K."/>
            <person name="Whitehead S."/>
            <person name="Barrell B.G."/>
        </authorList>
    </citation>
    <scope>NUCLEOTIDE SEQUENCE [LARGE SCALE GENOMIC DNA]</scope>
    <source>
        <strain>ATCC 25618 / H37Rv</strain>
    </source>
</reference>
<reference key="2">
    <citation type="journal article" date="2010" name="PLoS ONE">
        <title>Novel role of phosphorylation-dependent interaction between FtsZ and FipA in mycobacterial cell division.</title>
        <authorList>
            <person name="Sureka K."/>
            <person name="Hossain T."/>
            <person name="Mukherjee P."/>
            <person name="Chatterjee P."/>
            <person name="Datta P."/>
            <person name="Kundu M."/>
            <person name="Basu J."/>
        </authorList>
    </citation>
    <scope>RETRACTED PAPER</scope>
    <source>
        <strain>ATCC 25618 / H37Rv</strain>
    </source>
</reference>
<reference key="3">
    <citation type="journal article" date="2022" name="PLoS ONE">
        <authorList>
            <consortium name="PLOS ONE Editors"/>
        </authorList>
    </citation>
    <scope>RETRACTION NOTICE OF PUBMED:20066037</scope>
</reference>
<reference key="4">
    <citation type="journal article" date="2011" name="Mol. Cell. Proteomics">
        <title>Proteogenomic analysis of Mycobacterium tuberculosis by high resolution mass spectrometry.</title>
        <authorList>
            <person name="Kelkar D.S."/>
            <person name="Kumar D."/>
            <person name="Kumar P."/>
            <person name="Balakrishnan L."/>
            <person name="Muthusamy B."/>
            <person name="Yadav A.K."/>
            <person name="Shrivastava P."/>
            <person name="Marimuthu A."/>
            <person name="Anand S."/>
            <person name="Sundaram H."/>
            <person name="Kingsbury R."/>
            <person name="Harsha H.C."/>
            <person name="Nair B."/>
            <person name="Prasad T.S."/>
            <person name="Chauhan D.S."/>
            <person name="Katoch K."/>
            <person name="Katoch V.M."/>
            <person name="Kumar P."/>
            <person name="Chaerkady R."/>
            <person name="Ramachandran S."/>
            <person name="Dash D."/>
            <person name="Pandey A."/>
        </authorList>
    </citation>
    <scope>ACETYLATION [LARGE SCALE ANALYSIS] AT THR-2</scope>
    <scope>CLEAVAGE OF INITIATOR METHIONINE [LARGE SCALE ANALYSIS]</scope>
    <scope>IDENTIFICATION BY MASS SPECTROMETRY [LARGE SCALE ANALYSIS]</scope>
    <source>
        <strain>ATCC 25618 / H37Rv</strain>
    </source>
</reference>
<comment type="function">
    <text evidence="1">Essential cell division protein.</text>
</comment>
<comment type="subcellular location">
    <subcellularLocation>
        <location evidence="1">Cell membrane</location>
        <topology evidence="1">Single-pass type II membrane protein</topology>
    </subcellularLocation>
    <text evidence="1">Localizes to the division septum.</text>
</comment>
<comment type="similarity">
    <text evidence="1">Belongs to the FtsQ/DivIB family. FtsQ subfamily.</text>
</comment>
<comment type="caution">
    <text evidence="4">The article by Sureka et al was retracted by the editors after publication. Concerns were raised regarding the results presented in multiple figure panels. The raw data or replacement panels that were available did not satisfactorily address all the issues, thus questioning the integrity of the data.</text>
</comment>
<keyword id="KW-0007">Acetylation</keyword>
<keyword id="KW-0131">Cell cycle</keyword>
<keyword id="KW-0132">Cell division</keyword>
<keyword id="KW-1003">Cell membrane</keyword>
<keyword id="KW-0472">Membrane</keyword>
<keyword id="KW-1185">Reference proteome</keyword>
<keyword id="KW-0812">Transmembrane</keyword>
<keyword id="KW-1133">Transmembrane helix</keyword>
<gene>
    <name evidence="1" type="primary">ftsQ</name>
    <name type="ordered locus">Rv2151c</name>
    <name type="ORF">MTCY270.17</name>
</gene>
<dbReference type="EMBL" id="AL123456">
    <property type="protein sequence ID" value="CCP44927.1"/>
    <property type="molecule type" value="Genomic_DNA"/>
</dbReference>
<dbReference type="PIR" id="C70579">
    <property type="entry name" value="C70579"/>
</dbReference>
<dbReference type="RefSeq" id="NP_216667.1">
    <property type="nucleotide sequence ID" value="NC_000962.3"/>
</dbReference>
<dbReference type="RefSeq" id="WP_003411157.1">
    <property type="nucleotide sequence ID" value="NZ_NVQJ01000044.1"/>
</dbReference>
<dbReference type="SASBDB" id="P9WNA1"/>
<dbReference type="SMR" id="P9WNA1"/>
<dbReference type="IntAct" id="P9WNA1">
    <property type="interactions" value="2"/>
</dbReference>
<dbReference type="STRING" id="83332.Rv2151c"/>
<dbReference type="iPTMnet" id="P9WNA1"/>
<dbReference type="PaxDb" id="83332-Rv2151c"/>
<dbReference type="DNASU" id="888367"/>
<dbReference type="GeneID" id="888367"/>
<dbReference type="KEGG" id="mtu:Rv2151c"/>
<dbReference type="KEGG" id="mtv:RVBD_2151c"/>
<dbReference type="TubercuList" id="Rv2151c"/>
<dbReference type="eggNOG" id="COG1589">
    <property type="taxonomic scope" value="Bacteria"/>
</dbReference>
<dbReference type="InParanoid" id="P9WNA1"/>
<dbReference type="OrthoDB" id="9790760at2"/>
<dbReference type="PhylomeDB" id="P9WNA1"/>
<dbReference type="Proteomes" id="UP000001584">
    <property type="component" value="Chromosome"/>
</dbReference>
<dbReference type="GO" id="GO:0032153">
    <property type="term" value="C:cell division site"/>
    <property type="evidence" value="ECO:0007669"/>
    <property type="project" value="UniProtKB-UniRule"/>
</dbReference>
<dbReference type="GO" id="GO:0005829">
    <property type="term" value="C:cytosol"/>
    <property type="evidence" value="ECO:0007005"/>
    <property type="project" value="MTBBASE"/>
</dbReference>
<dbReference type="GO" id="GO:0005886">
    <property type="term" value="C:plasma membrane"/>
    <property type="evidence" value="ECO:0007005"/>
    <property type="project" value="MTBBASE"/>
</dbReference>
<dbReference type="GO" id="GO:0090529">
    <property type="term" value="P:cell septum assembly"/>
    <property type="evidence" value="ECO:0007669"/>
    <property type="project" value="InterPro"/>
</dbReference>
<dbReference type="GO" id="GO:0043093">
    <property type="term" value="P:FtsZ-dependent cytokinesis"/>
    <property type="evidence" value="ECO:0007669"/>
    <property type="project" value="UniProtKB-UniRule"/>
</dbReference>
<dbReference type="FunFam" id="3.10.20.310:FF:000021">
    <property type="entry name" value="Cell division protein FtsQ"/>
    <property type="match status" value="1"/>
</dbReference>
<dbReference type="Gene3D" id="3.10.20.310">
    <property type="entry name" value="membrane protein fhac"/>
    <property type="match status" value="1"/>
</dbReference>
<dbReference type="HAMAP" id="MF_00911">
    <property type="entry name" value="FtsQ_subfam"/>
    <property type="match status" value="1"/>
</dbReference>
<dbReference type="InterPro" id="IPR005548">
    <property type="entry name" value="Cell_div_FtsQ/DivIB_C"/>
</dbReference>
<dbReference type="InterPro" id="IPR026579">
    <property type="entry name" value="FtsQ"/>
</dbReference>
<dbReference type="InterPro" id="IPR050487">
    <property type="entry name" value="FtsQ_DivIB"/>
</dbReference>
<dbReference type="InterPro" id="IPR034746">
    <property type="entry name" value="POTRA"/>
</dbReference>
<dbReference type="InterPro" id="IPR013685">
    <property type="entry name" value="POTRA_FtsQ_type"/>
</dbReference>
<dbReference type="PANTHER" id="PTHR37820">
    <property type="entry name" value="CELL DIVISION PROTEIN DIVIB"/>
    <property type="match status" value="1"/>
</dbReference>
<dbReference type="PANTHER" id="PTHR37820:SF1">
    <property type="entry name" value="CELL DIVISION PROTEIN FTSQ"/>
    <property type="match status" value="1"/>
</dbReference>
<dbReference type="Pfam" id="PF03799">
    <property type="entry name" value="FtsQ_DivIB_C"/>
    <property type="match status" value="1"/>
</dbReference>
<dbReference type="Pfam" id="PF08478">
    <property type="entry name" value="POTRA_1"/>
    <property type="match status" value="1"/>
</dbReference>
<dbReference type="PROSITE" id="PS51779">
    <property type="entry name" value="POTRA"/>
    <property type="match status" value="1"/>
</dbReference>
<feature type="initiator methionine" description="Removed" evidence="5">
    <location>
        <position position="1"/>
    </location>
</feature>
<feature type="chain" id="PRO_0000160582" description="Cell division protein FtsQ">
    <location>
        <begin position="2"/>
        <end position="314"/>
    </location>
</feature>
<feature type="topological domain" description="Cytoplasmic" evidence="1">
    <location>
        <begin position="2"/>
        <end position="99"/>
    </location>
</feature>
<feature type="transmembrane region" description="Helical" evidence="1">
    <location>
        <begin position="100"/>
        <end position="120"/>
    </location>
</feature>
<feature type="topological domain" description="Extracellular" evidence="1">
    <location>
        <begin position="121"/>
        <end position="314"/>
    </location>
</feature>
<feature type="domain" description="POTRA" evidence="2">
    <location>
        <begin position="124"/>
        <end position="192"/>
    </location>
</feature>
<feature type="region of interest" description="Disordered" evidence="3">
    <location>
        <begin position="1"/>
        <end position="57"/>
    </location>
</feature>
<feature type="compositionally biased region" description="Basic and acidic residues" evidence="3">
    <location>
        <begin position="1"/>
        <end position="15"/>
    </location>
</feature>
<feature type="compositionally biased region" description="Basic and acidic residues" evidence="3">
    <location>
        <begin position="30"/>
        <end position="57"/>
    </location>
</feature>
<feature type="modified residue" description="N-acetylthreonine" evidence="5">
    <location>
        <position position="2"/>
    </location>
</feature>
<evidence type="ECO:0000255" key="1">
    <source>
        <dbReference type="HAMAP-Rule" id="MF_00911"/>
    </source>
</evidence>
<evidence type="ECO:0000255" key="2">
    <source>
        <dbReference type="PROSITE-ProRule" id="PRU01115"/>
    </source>
</evidence>
<evidence type="ECO:0000256" key="3">
    <source>
        <dbReference type="SAM" id="MobiDB-lite"/>
    </source>
</evidence>
<evidence type="ECO:0000305" key="4">
    <source>
    </source>
</evidence>
<evidence type="ECO:0007744" key="5">
    <source>
    </source>
</evidence>